<proteinExistence type="evidence at protein level"/>
<dbReference type="EC" id="4.4.1.4"/>
<dbReference type="EMBL" id="Z12621">
    <property type="protein sequence ID" value="CAA78267.1"/>
    <property type="status" value="ALT_INIT"/>
    <property type="molecule type" value="mRNA"/>
</dbReference>
<dbReference type="PIR" id="S29301">
    <property type="entry name" value="S29301"/>
</dbReference>
<dbReference type="SMR" id="P31757"/>
<dbReference type="Allergome" id="842">
    <property type="allergen name" value="All c Alliin lyase"/>
</dbReference>
<dbReference type="GO" id="GO:0005773">
    <property type="term" value="C:vacuole"/>
    <property type="evidence" value="ECO:0007669"/>
    <property type="project" value="UniProtKB-SubCell"/>
</dbReference>
<dbReference type="GO" id="GO:0047654">
    <property type="term" value="F:alliin lyase activity"/>
    <property type="evidence" value="ECO:0000250"/>
    <property type="project" value="UniProtKB"/>
</dbReference>
<dbReference type="GO" id="GO:0031404">
    <property type="term" value="F:chloride ion binding"/>
    <property type="evidence" value="ECO:0000250"/>
    <property type="project" value="UniProtKB"/>
</dbReference>
<dbReference type="GO" id="GO:0030170">
    <property type="term" value="F:pyridoxal phosphate binding"/>
    <property type="evidence" value="ECO:0000250"/>
    <property type="project" value="UniProtKB"/>
</dbReference>
<dbReference type="GO" id="GO:0008483">
    <property type="term" value="F:transaminase activity"/>
    <property type="evidence" value="ECO:0007669"/>
    <property type="project" value="TreeGrafter"/>
</dbReference>
<dbReference type="GO" id="GO:0006520">
    <property type="term" value="P:amino acid metabolic process"/>
    <property type="evidence" value="ECO:0007669"/>
    <property type="project" value="TreeGrafter"/>
</dbReference>
<dbReference type="CDD" id="cd00609">
    <property type="entry name" value="AAT_like"/>
    <property type="match status" value="1"/>
</dbReference>
<dbReference type="Gene3D" id="3.90.1150.10">
    <property type="entry name" value="Aspartate Aminotransferase, domain 1"/>
    <property type="match status" value="1"/>
</dbReference>
<dbReference type="Gene3D" id="2.10.25.30">
    <property type="entry name" value="EGF-like, alliinase"/>
    <property type="match status" value="1"/>
</dbReference>
<dbReference type="Gene3D" id="3.40.640.10">
    <property type="entry name" value="Type I PLP-dependent aspartate aminotransferase-like (Major domain)"/>
    <property type="match status" value="1"/>
</dbReference>
<dbReference type="InterPro" id="IPR006948">
    <property type="entry name" value="Alliinase_C"/>
</dbReference>
<dbReference type="InterPro" id="IPR037029">
    <property type="entry name" value="Alliinase_N_sf"/>
</dbReference>
<dbReference type="InterPro" id="IPR006947">
    <property type="entry name" value="EGF_alliinase"/>
</dbReference>
<dbReference type="InterPro" id="IPR050478">
    <property type="entry name" value="Ethylene_sulfur-biosynth"/>
</dbReference>
<dbReference type="InterPro" id="IPR015424">
    <property type="entry name" value="PyrdxlP-dep_Trfase"/>
</dbReference>
<dbReference type="InterPro" id="IPR015421">
    <property type="entry name" value="PyrdxlP-dep_Trfase_major"/>
</dbReference>
<dbReference type="InterPro" id="IPR015422">
    <property type="entry name" value="PyrdxlP-dep_Trfase_small"/>
</dbReference>
<dbReference type="PANTHER" id="PTHR43795">
    <property type="entry name" value="BIFUNCTIONAL ASPARTATE AMINOTRANSFERASE AND GLUTAMATE/ASPARTATE-PREPHENATE AMINOTRANSFERASE-RELATED"/>
    <property type="match status" value="1"/>
</dbReference>
<dbReference type="PANTHER" id="PTHR43795:SF20">
    <property type="entry name" value="TRYPTOPHAN AMINOTRANSFERASE-RELATED PROTEIN 3"/>
    <property type="match status" value="1"/>
</dbReference>
<dbReference type="Pfam" id="PF04864">
    <property type="entry name" value="Alliinase_C"/>
    <property type="match status" value="1"/>
</dbReference>
<dbReference type="Pfam" id="PF04863">
    <property type="entry name" value="EGF_alliinase"/>
    <property type="match status" value="1"/>
</dbReference>
<dbReference type="SUPFAM" id="SSF53383">
    <property type="entry name" value="PLP-dependent transferases"/>
    <property type="match status" value="1"/>
</dbReference>
<dbReference type="PROSITE" id="PS00022">
    <property type="entry name" value="EGF_1"/>
    <property type="match status" value="1"/>
</dbReference>
<protein>
    <recommendedName>
        <fullName>Alliin lyase</fullName>
        <shortName>Alliinase</shortName>
        <ecNumber>4.4.1.4</ecNumber>
    </recommendedName>
    <alternativeName>
        <fullName>Cysteine sulphoxide lyase</fullName>
    </alternativeName>
</protein>
<organism>
    <name type="scientific">Allium cepa</name>
    <name type="common">Onion</name>
    <dbReference type="NCBI Taxonomy" id="4679"/>
    <lineage>
        <taxon>Eukaryota</taxon>
        <taxon>Viridiplantae</taxon>
        <taxon>Streptophyta</taxon>
        <taxon>Embryophyta</taxon>
        <taxon>Tracheophyta</taxon>
        <taxon>Spermatophyta</taxon>
        <taxon>Magnoliopsida</taxon>
        <taxon>Liliopsida</taxon>
        <taxon>Asparagales</taxon>
        <taxon>Amaryllidaceae</taxon>
        <taxon>Allioideae</taxon>
        <taxon>Allieae</taxon>
        <taxon>Allium</taxon>
    </lineage>
</organism>
<accession>P31757</accession>
<evidence type="ECO:0000250" key="1"/>
<evidence type="ECO:0000250" key="2">
    <source>
        <dbReference type="UniProtKB" id="Q01594"/>
    </source>
</evidence>
<evidence type="ECO:0000255" key="3"/>
<evidence type="ECO:0000255" key="4">
    <source>
        <dbReference type="PROSITE-ProRule" id="PRU00498"/>
    </source>
</evidence>
<evidence type="ECO:0000269" key="5">
    <source>
    </source>
</evidence>
<evidence type="ECO:0000305" key="6"/>
<keyword id="KW-0868">Chloride</keyword>
<keyword id="KW-0903">Direct protein sequencing</keyword>
<keyword id="KW-1015">Disulfide bond</keyword>
<keyword id="KW-0245">EGF-like domain</keyword>
<keyword id="KW-0325">Glycoprotein</keyword>
<keyword id="KW-0456">Lyase</keyword>
<keyword id="KW-0663">Pyridoxal phosphate</keyword>
<keyword id="KW-0732">Signal</keyword>
<keyword id="KW-0926">Vacuole</keyword>
<comment type="catalytic activity">
    <reaction>
        <text>an S-alkyl-L-cysteine S-oxide = an S-alkyl sulfenate + 2-aminoprop-2-enoate</text>
        <dbReference type="Rhea" id="RHEA:20141"/>
        <dbReference type="ChEBI" id="CHEBI:22326"/>
        <dbReference type="ChEBI" id="CHEBI:76565"/>
        <dbReference type="ChEBI" id="CHEBI:142409"/>
        <dbReference type="EC" id="4.4.1.4"/>
    </reaction>
</comment>
<comment type="cofactor">
    <cofactor>
        <name>pyridoxal 5'-phosphate</name>
        <dbReference type="ChEBI" id="CHEBI:597326"/>
    </cofactor>
</comment>
<comment type="subunit">
    <text evidence="1">Homodimer.</text>
</comment>
<comment type="subcellular location">
    <subcellularLocation>
        <location>Vacuole</location>
    </subcellularLocation>
</comment>
<comment type="domain">
    <text evidence="1">The 6 Cys residues of the EGF-like domain are arranged in a disulfide pattern different from the one found in the canonical EGFs. The function of this domain is unclear. It may be a binding site for other proteins or the docking site for a putative alliinase receptor (By similarity).</text>
</comment>
<comment type="similarity">
    <text evidence="6">Belongs to the alliinase family.</text>
</comment>
<comment type="sequence caution" evidence="6">
    <conflict type="erroneous initiation">
        <sequence resource="EMBL-CDS" id="CAA78267"/>
    </conflict>
</comment>
<name>ALLN_ALLCE</name>
<sequence>MESYDKVGSNKVPCLLILTCIIMSSFVNNNIVQAKVSWSLKAAEEAEAVANINCSGHGRAFLDGILSDGSPKCECNTCYTGADCSEKITGCSADVASGDGLFLEEYWQQHKENSAVLVSGWHRMSYFFNPVSNFISFELEKTIKELHEIVGNAAAKDRYIVFGVGVTQLIHGLVISLSPNMTATPCAPQSKVVAHAPYYPVFREQTKYFDKKGYEWKGNAADYVNTSTPEQFIEMVTSPNNPEGLLRHEVIKGCKSIYYMVYYWPHYTPIKYKADEDIMLFTMSKYTGHSGSRFGWALIKDETVYNKLLNYMTKNTEGTSRETQLRSLKILKEVIAMVKTQNGTMRDLNTFGFQKLRERWVNITALLDKSDRFSYQKLPQSEYCNYFRRMRPPSPSYAWVKCEWEEDKDCYQTFQNGRINTQSGEGFEAGSRYVRLSLIKTKDDFDQLMYYLKIMVEAKRKTPLIKQLSNDQISRRPFI</sequence>
<feature type="signal peptide" evidence="3">
    <location>
        <begin position="1"/>
        <end position="25"/>
    </location>
</feature>
<feature type="propeptide" id="PRO_0000020683" evidence="5">
    <location>
        <begin position="26"/>
        <end position="34"/>
    </location>
</feature>
<feature type="chain" id="PRO_0000020684" description="Alliin lyase">
    <location>
        <begin position="35"/>
        <end position="479"/>
    </location>
</feature>
<feature type="domain" description="EGF-like; atypical">
    <location>
        <begin position="47"/>
        <end position="93"/>
    </location>
</feature>
<feature type="binding site" evidence="2">
    <location>
        <begin position="126"/>
        <end position="134"/>
    </location>
    <ligand>
        <name>chloride</name>
        <dbReference type="ChEBI" id="CHEBI:17996"/>
    </ligand>
</feature>
<feature type="modified residue" description="N6-(pyridoxal phosphate)lysine" evidence="2">
    <location>
        <position position="285"/>
    </location>
</feature>
<feature type="glycosylation site" description="N-linked (GlcNAc...) asparagine" evidence="3">
    <location>
        <position position="53"/>
    </location>
</feature>
<feature type="glycosylation site" description="N-linked (GlcNAc...) asparagine" evidence="2 4">
    <location>
        <position position="180"/>
    </location>
</feature>
<feature type="glycosylation site" description="N-linked (GlcNAc...) asparagine" evidence="2 4">
    <location>
        <position position="225"/>
    </location>
</feature>
<feature type="glycosylation site" description="N-linked (GlcNAc...) asparagine" evidence="3">
    <location>
        <position position="342"/>
    </location>
</feature>
<feature type="glycosylation site" description="N-linked (GlcNAc...) asparagine" evidence="2 4">
    <location>
        <position position="362"/>
    </location>
</feature>
<feature type="disulfide bond" evidence="2">
    <location>
        <begin position="54"/>
        <end position="73"/>
    </location>
</feature>
<feature type="disulfide bond" evidence="2">
    <location>
        <begin position="75"/>
        <end position="84"/>
    </location>
</feature>
<feature type="disulfide bond" evidence="2">
    <location>
        <begin position="78"/>
        <end position="91"/>
    </location>
</feature>
<feature type="disulfide bond" evidence="2">
    <location>
        <begin position="402"/>
        <end position="410"/>
    </location>
</feature>
<feature type="sequence conflict" description="In Ref. 1; AA sequence." evidence="6" ref="1">
    <original>S</original>
    <variation>T</variation>
    <location>
        <position position="37"/>
    </location>
</feature>
<reference key="1">
    <citation type="journal article" date="1992" name="Eur. J. Biochem.">
        <title>Isolation and characterization of alliinase cDNA clones from garlic (Allium sativum L.) and related species.</title>
        <authorList>
            <person name="van Damme E.J.M."/>
            <person name="Smeets K."/>
            <person name="Torrekens S."/>
            <person name="van Leuven F."/>
            <person name="Peumans W.J."/>
        </authorList>
    </citation>
    <scope>NUCLEOTIDE SEQUENCE [MRNA]</scope>
    <scope>PROTEIN SEQUENCE OF 35-54</scope>
</reference>